<keyword id="KW-0456">Lyase</keyword>
<organism>
    <name type="scientific">Paraburkholderia phytofirmans (strain DSM 17436 / LMG 22146 / PsJN)</name>
    <name type="common">Burkholderia phytofirmans</name>
    <dbReference type="NCBI Taxonomy" id="398527"/>
    <lineage>
        <taxon>Bacteria</taxon>
        <taxon>Pseudomonadati</taxon>
        <taxon>Pseudomonadota</taxon>
        <taxon>Betaproteobacteria</taxon>
        <taxon>Burkholderiales</taxon>
        <taxon>Burkholderiaceae</taxon>
        <taxon>Paraburkholderia</taxon>
    </lineage>
</organism>
<accession>B2T7M8</accession>
<comment type="catalytic activity">
    <reaction evidence="1">
        <text>(4aS,6R)-4a-hydroxy-L-erythro-5,6,7,8-tetrahydrobiopterin = (6R)-L-erythro-6,7-dihydrobiopterin + H2O</text>
        <dbReference type="Rhea" id="RHEA:11920"/>
        <dbReference type="ChEBI" id="CHEBI:15377"/>
        <dbReference type="ChEBI" id="CHEBI:15642"/>
        <dbReference type="ChEBI" id="CHEBI:43120"/>
        <dbReference type="EC" id="4.2.1.96"/>
    </reaction>
</comment>
<comment type="similarity">
    <text evidence="1">Belongs to the pterin-4-alpha-carbinolamine dehydratase family.</text>
</comment>
<reference key="1">
    <citation type="journal article" date="2011" name="J. Bacteriol.">
        <title>Complete genome sequence of the plant growth-promoting endophyte Burkholderia phytofirmans strain PsJN.</title>
        <authorList>
            <person name="Weilharter A."/>
            <person name="Mitter B."/>
            <person name="Shin M.V."/>
            <person name="Chain P.S."/>
            <person name="Nowak J."/>
            <person name="Sessitsch A."/>
        </authorList>
    </citation>
    <scope>NUCLEOTIDE SEQUENCE [LARGE SCALE GENOMIC DNA]</scope>
    <source>
        <strain>DSM 17436 / LMG 22146 / PsJN</strain>
    </source>
</reference>
<sequence length="96" mass="10940">MIQKLTSEQRATQLAGLHGWQAVADRDAIQRQFKFADFNEAFGFMTRVAIKAQEMDHHPEWFNVYNKVEITLSTHDAGGLTERDIKLATFIDSITA</sequence>
<feature type="chain" id="PRO_1000192913" description="Putative pterin-4-alpha-carbinolamine dehydratase">
    <location>
        <begin position="1"/>
        <end position="96"/>
    </location>
</feature>
<name>PHS_PARPJ</name>
<proteinExistence type="inferred from homology"/>
<dbReference type="EC" id="4.2.1.96" evidence="1"/>
<dbReference type="EMBL" id="CP001052">
    <property type="protein sequence ID" value="ACD18309.1"/>
    <property type="molecule type" value="Genomic_DNA"/>
</dbReference>
<dbReference type="SMR" id="B2T7M8"/>
<dbReference type="STRING" id="398527.Bphyt_3922"/>
<dbReference type="KEGG" id="bpy:Bphyt_3922"/>
<dbReference type="eggNOG" id="COG2154">
    <property type="taxonomic scope" value="Bacteria"/>
</dbReference>
<dbReference type="HOGENOM" id="CLU_081974_3_2_4"/>
<dbReference type="Proteomes" id="UP000001739">
    <property type="component" value="Chromosome 1"/>
</dbReference>
<dbReference type="GO" id="GO:0008124">
    <property type="term" value="F:4-alpha-hydroxytetrahydrobiopterin dehydratase activity"/>
    <property type="evidence" value="ECO:0007669"/>
    <property type="project" value="UniProtKB-UniRule"/>
</dbReference>
<dbReference type="GO" id="GO:0006729">
    <property type="term" value="P:tetrahydrobiopterin biosynthetic process"/>
    <property type="evidence" value="ECO:0007669"/>
    <property type="project" value="InterPro"/>
</dbReference>
<dbReference type="CDD" id="cd00914">
    <property type="entry name" value="PCD_DCoH_subfamily_b"/>
    <property type="match status" value="1"/>
</dbReference>
<dbReference type="Gene3D" id="3.30.1360.20">
    <property type="entry name" value="Transcriptional coactivator/pterin dehydratase"/>
    <property type="match status" value="1"/>
</dbReference>
<dbReference type="HAMAP" id="MF_00434">
    <property type="entry name" value="Pterin_4_alpha"/>
    <property type="match status" value="1"/>
</dbReference>
<dbReference type="InterPro" id="IPR036428">
    <property type="entry name" value="PCD_sf"/>
</dbReference>
<dbReference type="InterPro" id="IPR001533">
    <property type="entry name" value="Pterin_deHydtase"/>
</dbReference>
<dbReference type="NCBIfam" id="NF002017">
    <property type="entry name" value="PRK00823.1-2"/>
    <property type="match status" value="1"/>
</dbReference>
<dbReference type="NCBIfam" id="NF002018">
    <property type="entry name" value="PRK00823.1-3"/>
    <property type="match status" value="1"/>
</dbReference>
<dbReference type="NCBIfam" id="NF002020">
    <property type="entry name" value="PRK00823.1-5"/>
    <property type="match status" value="1"/>
</dbReference>
<dbReference type="PANTHER" id="PTHR12599">
    <property type="entry name" value="PTERIN-4-ALPHA-CARBINOLAMINE DEHYDRATASE"/>
    <property type="match status" value="1"/>
</dbReference>
<dbReference type="PANTHER" id="PTHR12599:SF0">
    <property type="entry name" value="PTERIN-4-ALPHA-CARBINOLAMINE DEHYDRATASE"/>
    <property type="match status" value="1"/>
</dbReference>
<dbReference type="Pfam" id="PF01329">
    <property type="entry name" value="Pterin_4a"/>
    <property type="match status" value="1"/>
</dbReference>
<dbReference type="SUPFAM" id="SSF55248">
    <property type="entry name" value="PCD-like"/>
    <property type="match status" value="1"/>
</dbReference>
<evidence type="ECO:0000255" key="1">
    <source>
        <dbReference type="HAMAP-Rule" id="MF_00434"/>
    </source>
</evidence>
<protein>
    <recommendedName>
        <fullName evidence="1">Putative pterin-4-alpha-carbinolamine dehydratase</fullName>
        <shortName evidence="1">PHS</shortName>
        <ecNumber evidence="1">4.2.1.96</ecNumber>
    </recommendedName>
    <alternativeName>
        <fullName evidence="1">4-alpha-hydroxy-tetrahydropterin dehydratase</fullName>
    </alternativeName>
    <alternativeName>
        <fullName evidence="1">Pterin carbinolamine dehydratase</fullName>
        <shortName evidence="1">PCD</shortName>
    </alternativeName>
</protein>
<gene>
    <name type="ordered locus">Bphyt_3922</name>
</gene>